<sequence>MAGRKKAADFEQQLARLQEIVDALEGGDLPLEKSVALYKEGLGLARASREQLAKARNEIRLFTEGEVRDFDPEEGDDGDDR</sequence>
<gene>
    <name evidence="1" type="primary">xseB</name>
    <name type="ordered locus">DVU_1348</name>
</gene>
<protein>
    <recommendedName>
        <fullName evidence="1">Exodeoxyribonuclease 7 small subunit</fullName>
        <ecNumber evidence="1">3.1.11.6</ecNumber>
    </recommendedName>
    <alternativeName>
        <fullName evidence="1">Exodeoxyribonuclease VII small subunit</fullName>
        <shortName evidence="1">Exonuclease VII small subunit</shortName>
    </alternativeName>
</protein>
<evidence type="ECO:0000255" key="1">
    <source>
        <dbReference type="HAMAP-Rule" id="MF_00337"/>
    </source>
</evidence>
<dbReference type="EC" id="3.1.11.6" evidence="1"/>
<dbReference type="EMBL" id="AE017285">
    <property type="protein sequence ID" value="AAS95826.1"/>
    <property type="molecule type" value="Genomic_DNA"/>
</dbReference>
<dbReference type="RefSeq" id="WP_010938643.1">
    <property type="nucleotide sequence ID" value="NC_002937.3"/>
</dbReference>
<dbReference type="RefSeq" id="YP_010567.1">
    <property type="nucleotide sequence ID" value="NC_002937.3"/>
</dbReference>
<dbReference type="SMR" id="Q72CD5"/>
<dbReference type="IntAct" id="Q72CD5">
    <property type="interactions" value="1"/>
</dbReference>
<dbReference type="STRING" id="882.DVU_1348"/>
<dbReference type="PaxDb" id="882-DVU_1348"/>
<dbReference type="EnsemblBacteria" id="AAS95826">
    <property type="protein sequence ID" value="AAS95826"/>
    <property type="gene ID" value="DVU_1348"/>
</dbReference>
<dbReference type="KEGG" id="dvu:DVU_1348"/>
<dbReference type="eggNOG" id="COG1722">
    <property type="taxonomic scope" value="Bacteria"/>
</dbReference>
<dbReference type="HOGENOM" id="CLU_145918_2_2_7"/>
<dbReference type="OrthoDB" id="5340035at2"/>
<dbReference type="PhylomeDB" id="Q72CD5"/>
<dbReference type="Proteomes" id="UP000002194">
    <property type="component" value="Chromosome"/>
</dbReference>
<dbReference type="GO" id="GO:0005829">
    <property type="term" value="C:cytosol"/>
    <property type="evidence" value="ECO:0007669"/>
    <property type="project" value="TreeGrafter"/>
</dbReference>
<dbReference type="GO" id="GO:0009318">
    <property type="term" value="C:exodeoxyribonuclease VII complex"/>
    <property type="evidence" value="ECO:0007669"/>
    <property type="project" value="InterPro"/>
</dbReference>
<dbReference type="GO" id="GO:0008855">
    <property type="term" value="F:exodeoxyribonuclease VII activity"/>
    <property type="evidence" value="ECO:0007669"/>
    <property type="project" value="UniProtKB-UniRule"/>
</dbReference>
<dbReference type="GO" id="GO:0006308">
    <property type="term" value="P:DNA catabolic process"/>
    <property type="evidence" value="ECO:0007669"/>
    <property type="project" value="UniProtKB-UniRule"/>
</dbReference>
<dbReference type="Gene3D" id="1.10.287.1040">
    <property type="entry name" value="Exonuclease VII, small subunit"/>
    <property type="match status" value="1"/>
</dbReference>
<dbReference type="HAMAP" id="MF_00337">
    <property type="entry name" value="Exonuc_7_S"/>
    <property type="match status" value="1"/>
</dbReference>
<dbReference type="InterPro" id="IPR003761">
    <property type="entry name" value="Exonuc_VII_S"/>
</dbReference>
<dbReference type="InterPro" id="IPR037004">
    <property type="entry name" value="Exonuc_VII_ssu_sf"/>
</dbReference>
<dbReference type="NCBIfam" id="NF010670">
    <property type="entry name" value="PRK14067.1"/>
    <property type="match status" value="1"/>
</dbReference>
<dbReference type="NCBIfam" id="TIGR01280">
    <property type="entry name" value="xseB"/>
    <property type="match status" value="1"/>
</dbReference>
<dbReference type="PANTHER" id="PTHR34137">
    <property type="entry name" value="EXODEOXYRIBONUCLEASE 7 SMALL SUBUNIT"/>
    <property type="match status" value="1"/>
</dbReference>
<dbReference type="PANTHER" id="PTHR34137:SF1">
    <property type="entry name" value="EXODEOXYRIBONUCLEASE 7 SMALL SUBUNIT"/>
    <property type="match status" value="1"/>
</dbReference>
<dbReference type="Pfam" id="PF02609">
    <property type="entry name" value="Exonuc_VII_S"/>
    <property type="match status" value="1"/>
</dbReference>
<dbReference type="PIRSF" id="PIRSF006488">
    <property type="entry name" value="Exonuc_VII_S"/>
    <property type="match status" value="1"/>
</dbReference>
<dbReference type="SUPFAM" id="SSF116842">
    <property type="entry name" value="XseB-like"/>
    <property type="match status" value="1"/>
</dbReference>
<name>EX7S_NITV2</name>
<keyword id="KW-0963">Cytoplasm</keyword>
<keyword id="KW-0269">Exonuclease</keyword>
<keyword id="KW-0378">Hydrolase</keyword>
<keyword id="KW-0540">Nuclease</keyword>
<keyword id="KW-1185">Reference proteome</keyword>
<reference key="1">
    <citation type="journal article" date="2004" name="Nat. Biotechnol.">
        <title>The genome sequence of the anaerobic, sulfate-reducing bacterium Desulfovibrio vulgaris Hildenborough.</title>
        <authorList>
            <person name="Heidelberg J.F."/>
            <person name="Seshadri R."/>
            <person name="Haveman S.A."/>
            <person name="Hemme C.L."/>
            <person name="Paulsen I.T."/>
            <person name="Kolonay J.F."/>
            <person name="Eisen J.A."/>
            <person name="Ward N.L."/>
            <person name="Methe B.A."/>
            <person name="Brinkac L.M."/>
            <person name="Daugherty S.C."/>
            <person name="DeBoy R.T."/>
            <person name="Dodson R.J."/>
            <person name="Durkin A.S."/>
            <person name="Madupu R."/>
            <person name="Nelson W.C."/>
            <person name="Sullivan S.A."/>
            <person name="Fouts D.E."/>
            <person name="Haft D.H."/>
            <person name="Selengut J."/>
            <person name="Peterson J.D."/>
            <person name="Davidsen T.M."/>
            <person name="Zafar N."/>
            <person name="Zhou L."/>
            <person name="Radune D."/>
            <person name="Dimitrov G."/>
            <person name="Hance M."/>
            <person name="Tran K."/>
            <person name="Khouri H.M."/>
            <person name="Gill J."/>
            <person name="Utterback T.R."/>
            <person name="Feldblyum T.V."/>
            <person name="Wall J.D."/>
            <person name="Voordouw G."/>
            <person name="Fraser C.M."/>
        </authorList>
    </citation>
    <scope>NUCLEOTIDE SEQUENCE [LARGE SCALE GENOMIC DNA]</scope>
    <source>
        <strain>ATCC 29579 / DSM 644 / CCUG 34227 / NCIMB 8303 / VKM B-1760 / Hildenborough</strain>
    </source>
</reference>
<feature type="chain" id="PRO_0000206944" description="Exodeoxyribonuclease 7 small subunit">
    <location>
        <begin position="1"/>
        <end position="81"/>
    </location>
</feature>
<organism>
    <name type="scientific">Nitratidesulfovibrio vulgaris (strain ATCC 29579 / DSM 644 / CCUG 34227 / NCIMB 8303 / VKM B-1760 / Hildenborough)</name>
    <name type="common">Desulfovibrio vulgaris</name>
    <dbReference type="NCBI Taxonomy" id="882"/>
    <lineage>
        <taxon>Bacteria</taxon>
        <taxon>Pseudomonadati</taxon>
        <taxon>Thermodesulfobacteriota</taxon>
        <taxon>Desulfovibrionia</taxon>
        <taxon>Desulfovibrionales</taxon>
        <taxon>Desulfovibrionaceae</taxon>
        <taxon>Nitratidesulfovibrio</taxon>
    </lineage>
</organism>
<proteinExistence type="inferred from homology"/>
<comment type="function">
    <text evidence="1">Bidirectionally degrades single-stranded DNA into large acid-insoluble oligonucleotides, which are then degraded further into small acid-soluble oligonucleotides.</text>
</comment>
<comment type="catalytic activity">
    <reaction evidence="1">
        <text>Exonucleolytic cleavage in either 5'- to 3'- or 3'- to 5'-direction to yield nucleoside 5'-phosphates.</text>
        <dbReference type="EC" id="3.1.11.6"/>
    </reaction>
</comment>
<comment type="subunit">
    <text evidence="1">Heterooligomer composed of large and small subunits.</text>
</comment>
<comment type="subcellular location">
    <subcellularLocation>
        <location evidence="1">Cytoplasm</location>
    </subcellularLocation>
</comment>
<comment type="similarity">
    <text evidence="1">Belongs to the XseB family.</text>
</comment>
<accession>Q72CD5</accession>